<sequence>MEFSVKSGSPEKQRSACIVVGVFEPRRLSPIAEQLDKISDGYISALLRRGELEGKPGQTLLLHHVPNVLSERILLIGCGKERELDERQYKQVIQKTINTLNDTGSMEAVCFLTELHVKGRNNYWKVRQAVETAKETLYSFDQLKTNKSEPRRPLRKMVFNVPTRRELTSGERAIQHGLAIAAGIKAAKDLGNMPPNICNAAYLASQARQLADSYSKNVITRVIGEQQMKELGMHSYLAVGQGSQNESLMSVIEYKGNASEDARPIVLVGKGLTFDSGGISIKPSEGMDEMKYDMCGAAAVYGVMRMVAELQLPINVIGVLAGCENMPGGRAYRPGDVLTTMSGQTVEVLNTDAEGRLVLCDVLTYVERFEPEAVIDVATLTGACVIALGHHITGLMANHNPLAHELIAASEQSGDRAWRLPLGDEYQEQLESNFADMANIGGRPGGAITAGCFLSRFTRKYNWAHLDIAGTAWRSGKAKGATGRPVALLAQFLLNRAGFNGEE</sequence>
<evidence type="ECO:0000255" key="1">
    <source>
        <dbReference type="HAMAP-Rule" id="MF_00181"/>
    </source>
</evidence>
<comment type="function">
    <text evidence="1">Presumably involved in the processing and regular turnover of intracellular proteins. Catalyzes the removal of unsubstituted N-terminal amino acids from various peptides.</text>
</comment>
<comment type="catalytic activity">
    <reaction evidence="1">
        <text>Release of an N-terminal amino acid, Xaa-|-Yaa-, in which Xaa is preferably Leu, but may be other amino acids including Pro although not Arg or Lys, and Yaa may be Pro. Amino acid amides and methyl esters are also readily hydrolyzed, but rates on arylamides are exceedingly low.</text>
        <dbReference type="EC" id="3.4.11.1"/>
    </reaction>
</comment>
<comment type="catalytic activity">
    <reaction evidence="1">
        <text>Release of an N-terminal amino acid, preferentially leucine, but not glutamic or aspartic acids.</text>
        <dbReference type="EC" id="3.4.11.10"/>
    </reaction>
</comment>
<comment type="cofactor">
    <cofactor evidence="1">
        <name>Mn(2+)</name>
        <dbReference type="ChEBI" id="CHEBI:29035"/>
    </cofactor>
    <text evidence="1">Binds 2 manganese ions per subunit.</text>
</comment>
<comment type="subcellular location">
    <subcellularLocation>
        <location evidence="1">Cytoplasm</location>
    </subcellularLocation>
</comment>
<comment type="similarity">
    <text evidence="1">Belongs to the peptidase M17 family.</text>
</comment>
<dbReference type="EC" id="3.4.11.1" evidence="1"/>
<dbReference type="EC" id="3.4.11.10" evidence="1"/>
<dbReference type="EMBL" id="AP009240">
    <property type="protein sequence ID" value="BAG80090.1"/>
    <property type="molecule type" value="Genomic_DNA"/>
</dbReference>
<dbReference type="RefSeq" id="WP_000397144.1">
    <property type="nucleotide sequence ID" value="NC_011415.1"/>
</dbReference>
<dbReference type="SMR" id="B6I2H3"/>
<dbReference type="MEROPS" id="M17.003"/>
<dbReference type="GeneID" id="93777558"/>
<dbReference type="KEGG" id="ecy:ECSE_4566"/>
<dbReference type="HOGENOM" id="CLU_013734_2_2_6"/>
<dbReference type="Proteomes" id="UP000008199">
    <property type="component" value="Chromosome"/>
</dbReference>
<dbReference type="GO" id="GO:0005737">
    <property type="term" value="C:cytoplasm"/>
    <property type="evidence" value="ECO:0007669"/>
    <property type="project" value="UniProtKB-SubCell"/>
</dbReference>
<dbReference type="GO" id="GO:0030145">
    <property type="term" value="F:manganese ion binding"/>
    <property type="evidence" value="ECO:0007669"/>
    <property type="project" value="UniProtKB-UniRule"/>
</dbReference>
<dbReference type="GO" id="GO:0070006">
    <property type="term" value="F:metalloaminopeptidase activity"/>
    <property type="evidence" value="ECO:0007669"/>
    <property type="project" value="InterPro"/>
</dbReference>
<dbReference type="GO" id="GO:0006508">
    <property type="term" value="P:proteolysis"/>
    <property type="evidence" value="ECO:0007669"/>
    <property type="project" value="UniProtKB-KW"/>
</dbReference>
<dbReference type="CDD" id="cd00433">
    <property type="entry name" value="Peptidase_M17"/>
    <property type="match status" value="1"/>
</dbReference>
<dbReference type="FunFam" id="3.40.220.10:FF:000001">
    <property type="entry name" value="Probable cytosol aminopeptidase"/>
    <property type="match status" value="1"/>
</dbReference>
<dbReference type="FunFam" id="3.40.630.10:FF:000004">
    <property type="entry name" value="Probable cytosol aminopeptidase"/>
    <property type="match status" value="1"/>
</dbReference>
<dbReference type="Gene3D" id="3.40.220.10">
    <property type="entry name" value="Leucine Aminopeptidase, subunit E, domain 1"/>
    <property type="match status" value="1"/>
</dbReference>
<dbReference type="Gene3D" id="3.40.630.10">
    <property type="entry name" value="Zn peptidases"/>
    <property type="match status" value="1"/>
</dbReference>
<dbReference type="HAMAP" id="MF_00181">
    <property type="entry name" value="Cytosol_peptidase_M17"/>
    <property type="match status" value="1"/>
</dbReference>
<dbReference type="InterPro" id="IPR011356">
    <property type="entry name" value="Leucine_aapep/pepB"/>
</dbReference>
<dbReference type="InterPro" id="IPR043472">
    <property type="entry name" value="Macro_dom-like"/>
</dbReference>
<dbReference type="InterPro" id="IPR000819">
    <property type="entry name" value="Peptidase_M17_C"/>
</dbReference>
<dbReference type="InterPro" id="IPR023042">
    <property type="entry name" value="Peptidase_M17_leu_NH2_pept"/>
</dbReference>
<dbReference type="InterPro" id="IPR008283">
    <property type="entry name" value="Peptidase_M17_N"/>
</dbReference>
<dbReference type="NCBIfam" id="NF002072">
    <property type="entry name" value="PRK00913.1-1"/>
    <property type="match status" value="1"/>
</dbReference>
<dbReference type="NCBIfam" id="NF002073">
    <property type="entry name" value="PRK00913.1-2"/>
    <property type="match status" value="1"/>
</dbReference>
<dbReference type="NCBIfam" id="NF002074">
    <property type="entry name" value="PRK00913.1-4"/>
    <property type="match status" value="1"/>
</dbReference>
<dbReference type="PANTHER" id="PTHR11963:SF23">
    <property type="entry name" value="CYTOSOL AMINOPEPTIDASE"/>
    <property type="match status" value="1"/>
</dbReference>
<dbReference type="PANTHER" id="PTHR11963">
    <property type="entry name" value="LEUCINE AMINOPEPTIDASE-RELATED"/>
    <property type="match status" value="1"/>
</dbReference>
<dbReference type="Pfam" id="PF00883">
    <property type="entry name" value="Peptidase_M17"/>
    <property type="match status" value="1"/>
</dbReference>
<dbReference type="Pfam" id="PF02789">
    <property type="entry name" value="Peptidase_M17_N"/>
    <property type="match status" value="1"/>
</dbReference>
<dbReference type="PRINTS" id="PR00481">
    <property type="entry name" value="LAMNOPPTDASE"/>
</dbReference>
<dbReference type="SUPFAM" id="SSF52949">
    <property type="entry name" value="Macro domain-like"/>
    <property type="match status" value="1"/>
</dbReference>
<dbReference type="SUPFAM" id="SSF53187">
    <property type="entry name" value="Zn-dependent exopeptidases"/>
    <property type="match status" value="1"/>
</dbReference>
<dbReference type="PROSITE" id="PS00631">
    <property type="entry name" value="CYTOSOL_AP"/>
    <property type="match status" value="1"/>
</dbReference>
<feature type="chain" id="PRO_1000098322" description="Probable cytosol aminopeptidase">
    <location>
        <begin position="1"/>
        <end position="503"/>
    </location>
</feature>
<feature type="active site" evidence="1">
    <location>
        <position position="282"/>
    </location>
</feature>
<feature type="active site" evidence="1">
    <location>
        <position position="356"/>
    </location>
</feature>
<feature type="binding site" evidence="1">
    <location>
        <position position="270"/>
    </location>
    <ligand>
        <name>Mn(2+)</name>
        <dbReference type="ChEBI" id="CHEBI:29035"/>
        <label>2</label>
    </ligand>
</feature>
<feature type="binding site" evidence="1">
    <location>
        <position position="275"/>
    </location>
    <ligand>
        <name>Mn(2+)</name>
        <dbReference type="ChEBI" id="CHEBI:29035"/>
        <label>1</label>
    </ligand>
</feature>
<feature type="binding site" evidence="1">
    <location>
        <position position="275"/>
    </location>
    <ligand>
        <name>Mn(2+)</name>
        <dbReference type="ChEBI" id="CHEBI:29035"/>
        <label>2</label>
    </ligand>
</feature>
<feature type="binding site" evidence="1">
    <location>
        <position position="293"/>
    </location>
    <ligand>
        <name>Mn(2+)</name>
        <dbReference type="ChEBI" id="CHEBI:29035"/>
        <label>2</label>
    </ligand>
</feature>
<feature type="binding site" evidence="1">
    <location>
        <position position="352"/>
    </location>
    <ligand>
        <name>Mn(2+)</name>
        <dbReference type="ChEBI" id="CHEBI:29035"/>
        <label>1</label>
    </ligand>
</feature>
<feature type="binding site" evidence="1">
    <location>
        <position position="354"/>
    </location>
    <ligand>
        <name>Mn(2+)</name>
        <dbReference type="ChEBI" id="CHEBI:29035"/>
        <label>1</label>
    </ligand>
</feature>
<feature type="binding site" evidence="1">
    <location>
        <position position="354"/>
    </location>
    <ligand>
        <name>Mn(2+)</name>
        <dbReference type="ChEBI" id="CHEBI:29035"/>
        <label>2</label>
    </ligand>
</feature>
<accession>B6I2H3</accession>
<protein>
    <recommendedName>
        <fullName evidence="1">Probable cytosol aminopeptidase</fullName>
        <ecNumber evidence="1">3.4.11.1</ecNumber>
    </recommendedName>
    <alternativeName>
        <fullName evidence="1">Leucine aminopeptidase</fullName>
        <shortName evidence="1">LAP</shortName>
        <ecNumber evidence="1">3.4.11.10</ecNumber>
    </alternativeName>
    <alternativeName>
        <fullName evidence="1">Leucyl aminopeptidase</fullName>
    </alternativeName>
</protein>
<organism>
    <name type="scientific">Escherichia coli (strain SE11)</name>
    <dbReference type="NCBI Taxonomy" id="409438"/>
    <lineage>
        <taxon>Bacteria</taxon>
        <taxon>Pseudomonadati</taxon>
        <taxon>Pseudomonadota</taxon>
        <taxon>Gammaproteobacteria</taxon>
        <taxon>Enterobacterales</taxon>
        <taxon>Enterobacteriaceae</taxon>
        <taxon>Escherichia</taxon>
    </lineage>
</organism>
<proteinExistence type="inferred from homology"/>
<gene>
    <name evidence="1" type="primary">pepA</name>
    <name type="ordered locus">ECSE_4566</name>
</gene>
<name>AMPA_ECOSE</name>
<reference key="1">
    <citation type="journal article" date="2008" name="DNA Res.">
        <title>Complete genome sequence and comparative analysis of the wild-type commensal Escherichia coli strain SE11 isolated from a healthy adult.</title>
        <authorList>
            <person name="Oshima K."/>
            <person name="Toh H."/>
            <person name="Ogura Y."/>
            <person name="Sasamoto H."/>
            <person name="Morita H."/>
            <person name="Park S.-H."/>
            <person name="Ooka T."/>
            <person name="Iyoda S."/>
            <person name="Taylor T.D."/>
            <person name="Hayashi T."/>
            <person name="Itoh K."/>
            <person name="Hattori M."/>
        </authorList>
    </citation>
    <scope>NUCLEOTIDE SEQUENCE [LARGE SCALE GENOMIC DNA]</scope>
    <source>
        <strain>SE11</strain>
    </source>
</reference>
<keyword id="KW-0031">Aminopeptidase</keyword>
<keyword id="KW-0963">Cytoplasm</keyword>
<keyword id="KW-0378">Hydrolase</keyword>
<keyword id="KW-0464">Manganese</keyword>
<keyword id="KW-0479">Metal-binding</keyword>
<keyword id="KW-0645">Protease</keyword>